<proteinExistence type="inferred from homology"/>
<dbReference type="EC" id="3.5.1.108" evidence="1"/>
<dbReference type="EMBL" id="CP000109">
    <property type="protein sequence ID" value="ABB41184.1"/>
    <property type="molecule type" value="Genomic_DNA"/>
</dbReference>
<dbReference type="SMR" id="Q31I39"/>
<dbReference type="STRING" id="317025.Tcr_0588"/>
<dbReference type="KEGG" id="tcx:Tcr_0588"/>
<dbReference type="eggNOG" id="COG0774">
    <property type="taxonomic scope" value="Bacteria"/>
</dbReference>
<dbReference type="HOGENOM" id="CLU_046528_1_0_6"/>
<dbReference type="OrthoDB" id="9802746at2"/>
<dbReference type="UniPathway" id="UPA00359">
    <property type="reaction ID" value="UER00478"/>
</dbReference>
<dbReference type="GO" id="GO:0016020">
    <property type="term" value="C:membrane"/>
    <property type="evidence" value="ECO:0007669"/>
    <property type="project" value="GOC"/>
</dbReference>
<dbReference type="GO" id="GO:0046872">
    <property type="term" value="F:metal ion binding"/>
    <property type="evidence" value="ECO:0007669"/>
    <property type="project" value="UniProtKB-KW"/>
</dbReference>
<dbReference type="GO" id="GO:0103117">
    <property type="term" value="F:UDP-3-O-acyl-N-acetylglucosamine deacetylase activity"/>
    <property type="evidence" value="ECO:0007669"/>
    <property type="project" value="UniProtKB-UniRule"/>
</dbReference>
<dbReference type="GO" id="GO:0009245">
    <property type="term" value="P:lipid A biosynthetic process"/>
    <property type="evidence" value="ECO:0007669"/>
    <property type="project" value="UniProtKB-UniRule"/>
</dbReference>
<dbReference type="Gene3D" id="3.30.230.20">
    <property type="entry name" value="lpxc deacetylase, domain 1"/>
    <property type="match status" value="1"/>
</dbReference>
<dbReference type="Gene3D" id="3.30.1700.10">
    <property type="entry name" value="lpxc deacetylase, domain 2"/>
    <property type="match status" value="1"/>
</dbReference>
<dbReference type="HAMAP" id="MF_00388">
    <property type="entry name" value="LpxC"/>
    <property type="match status" value="1"/>
</dbReference>
<dbReference type="InterPro" id="IPR020568">
    <property type="entry name" value="Ribosomal_Su5_D2-typ_SF"/>
</dbReference>
<dbReference type="InterPro" id="IPR004463">
    <property type="entry name" value="UDP-acyl_GlcNac_deAcase"/>
</dbReference>
<dbReference type="InterPro" id="IPR011334">
    <property type="entry name" value="UDP-acyl_GlcNac_deAcase_C"/>
</dbReference>
<dbReference type="InterPro" id="IPR015870">
    <property type="entry name" value="UDP-acyl_N-AcGlcN_deAcase_N"/>
</dbReference>
<dbReference type="NCBIfam" id="TIGR00325">
    <property type="entry name" value="lpxC"/>
    <property type="match status" value="1"/>
</dbReference>
<dbReference type="PANTHER" id="PTHR33694">
    <property type="entry name" value="UDP-3-O-ACYL-N-ACETYLGLUCOSAMINE DEACETYLASE 1, MITOCHONDRIAL-RELATED"/>
    <property type="match status" value="1"/>
</dbReference>
<dbReference type="PANTHER" id="PTHR33694:SF1">
    <property type="entry name" value="UDP-3-O-ACYL-N-ACETYLGLUCOSAMINE DEACETYLASE 1, MITOCHONDRIAL-RELATED"/>
    <property type="match status" value="1"/>
</dbReference>
<dbReference type="Pfam" id="PF03331">
    <property type="entry name" value="LpxC"/>
    <property type="match status" value="1"/>
</dbReference>
<dbReference type="SUPFAM" id="SSF54211">
    <property type="entry name" value="Ribosomal protein S5 domain 2-like"/>
    <property type="match status" value="2"/>
</dbReference>
<accession>Q31I39</accession>
<reference key="1">
    <citation type="journal article" date="2006" name="PLoS Biol.">
        <title>The genome of deep-sea vent chemolithoautotroph Thiomicrospira crunogena XCL-2.</title>
        <authorList>
            <person name="Scott K.M."/>
            <person name="Sievert S.M."/>
            <person name="Abril F.N."/>
            <person name="Ball L.A."/>
            <person name="Barrett C.J."/>
            <person name="Blake R.A."/>
            <person name="Boller A.J."/>
            <person name="Chain P.S.G."/>
            <person name="Clark J.A."/>
            <person name="Davis C.R."/>
            <person name="Detter C."/>
            <person name="Do K.F."/>
            <person name="Dobrinski K.P."/>
            <person name="Faza B.I."/>
            <person name="Fitzpatrick K.A."/>
            <person name="Freyermuth S.K."/>
            <person name="Harmer T.L."/>
            <person name="Hauser L.J."/>
            <person name="Huegler M."/>
            <person name="Kerfeld C.A."/>
            <person name="Klotz M.G."/>
            <person name="Kong W.W."/>
            <person name="Land M."/>
            <person name="Lapidus A."/>
            <person name="Larimer F.W."/>
            <person name="Longo D.L."/>
            <person name="Lucas S."/>
            <person name="Malfatti S.A."/>
            <person name="Massey S.E."/>
            <person name="Martin D.D."/>
            <person name="McCuddin Z."/>
            <person name="Meyer F."/>
            <person name="Moore J.L."/>
            <person name="Ocampo L.H. Jr."/>
            <person name="Paul J.H."/>
            <person name="Paulsen I.T."/>
            <person name="Reep D.K."/>
            <person name="Ren Q."/>
            <person name="Ross R.L."/>
            <person name="Sato P.Y."/>
            <person name="Thomas P."/>
            <person name="Tinkham L.E."/>
            <person name="Zeruth G.T."/>
        </authorList>
    </citation>
    <scope>NUCLEOTIDE SEQUENCE [LARGE SCALE GENOMIC DNA]</scope>
    <source>
        <strain>DSM 25203 / XCL-2</strain>
    </source>
</reference>
<sequence length="306" mass="33927">MKQRTLANPIKAKGVGLHTGHKSIMTLRPAPVNTGIVFRRIDQTPIVEFPVSPELVKETMLCTTIVQEQDNQKIKIATIEHLMSALAGVGIDNLYIDITADEVPIMDGSASHFIFLLQSAGIQLQEASKKFIRIKKQVKVQNEKGGVAEFSPYEGFRLNFSIEFDHPAFDQTAEKMTLSFSSTAYFKEVSRARTFGFMKDMEKLRAQNLGLGAGLHNAIGLDENGVVNQEGLRDKDEFVRHKILDAVGDLYMAGHPIIGEFTAHKSGHALNNQLLRALVADPEAYEVVTYDDEEPPIQYGSSKILV</sequence>
<organism>
    <name type="scientific">Hydrogenovibrio crunogenus (strain DSM 25203 / XCL-2)</name>
    <name type="common">Thiomicrospira crunogena</name>
    <dbReference type="NCBI Taxonomy" id="317025"/>
    <lineage>
        <taxon>Bacteria</taxon>
        <taxon>Pseudomonadati</taxon>
        <taxon>Pseudomonadota</taxon>
        <taxon>Gammaproteobacteria</taxon>
        <taxon>Thiotrichales</taxon>
        <taxon>Piscirickettsiaceae</taxon>
        <taxon>Hydrogenovibrio</taxon>
    </lineage>
</organism>
<evidence type="ECO:0000255" key="1">
    <source>
        <dbReference type="HAMAP-Rule" id="MF_00388"/>
    </source>
</evidence>
<protein>
    <recommendedName>
        <fullName evidence="1">UDP-3-O-acyl-N-acetylglucosamine deacetylase</fullName>
        <shortName evidence="1">UDP-3-O-acyl-GlcNAc deacetylase</shortName>
        <ecNumber evidence="1">3.5.1.108</ecNumber>
    </recommendedName>
    <alternativeName>
        <fullName evidence="1">UDP-3-O-[R-3-hydroxymyristoyl]-N-acetylglucosamine deacetylase</fullName>
    </alternativeName>
</protein>
<name>LPXC_HYDCU</name>
<feature type="chain" id="PRO_1000122828" description="UDP-3-O-acyl-N-acetylglucosamine deacetylase">
    <location>
        <begin position="1"/>
        <end position="306"/>
    </location>
</feature>
<feature type="active site" description="Proton donor" evidence="1">
    <location>
        <position position="268"/>
    </location>
</feature>
<feature type="binding site" evidence="1">
    <location>
        <position position="81"/>
    </location>
    <ligand>
        <name>Zn(2+)</name>
        <dbReference type="ChEBI" id="CHEBI:29105"/>
    </ligand>
</feature>
<feature type="binding site" evidence="1">
    <location>
        <position position="241"/>
    </location>
    <ligand>
        <name>Zn(2+)</name>
        <dbReference type="ChEBI" id="CHEBI:29105"/>
    </ligand>
</feature>
<feature type="binding site" evidence="1">
    <location>
        <position position="245"/>
    </location>
    <ligand>
        <name>Zn(2+)</name>
        <dbReference type="ChEBI" id="CHEBI:29105"/>
    </ligand>
</feature>
<gene>
    <name evidence="1" type="primary">lpxC</name>
    <name type="ordered locus">Tcr_0588</name>
</gene>
<comment type="function">
    <text evidence="1">Catalyzes the hydrolysis of UDP-3-O-myristoyl-N-acetylglucosamine to form UDP-3-O-myristoylglucosamine and acetate, the committed step in lipid A biosynthesis.</text>
</comment>
<comment type="catalytic activity">
    <reaction evidence="1">
        <text>a UDP-3-O-[(3R)-3-hydroxyacyl]-N-acetyl-alpha-D-glucosamine + H2O = a UDP-3-O-[(3R)-3-hydroxyacyl]-alpha-D-glucosamine + acetate</text>
        <dbReference type="Rhea" id="RHEA:67816"/>
        <dbReference type="ChEBI" id="CHEBI:15377"/>
        <dbReference type="ChEBI" id="CHEBI:30089"/>
        <dbReference type="ChEBI" id="CHEBI:137740"/>
        <dbReference type="ChEBI" id="CHEBI:173225"/>
        <dbReference type="EC" id="3.5.1.108"/>
    </reaction>
</comment>
<comment type="cofactor">
    <cofactor evidence="1">
        <name>Zn(2+)</name>
        <dbReference type="ChEBI" id="CHEBI:29105"/>
    </cofactor>
</comment>
<comment type="pathway">
    <text evidence="1">Glycolipid biosynthesis; lipid IV(A) biosynthesis; lipid IV(A) from (3R)-3-hydroxytetradecanoyl-[acyl-carrier-protein] and UDP-N-acetyl-alpha-D-glucosamine: step 2/6.</text>
</comment>
<comment type="similarity">
    <text evidence="1">Belongs to the LpxC family.</text>
</comment>
<keyword id="KW-0378">Hydrolase</keyword>
<keyword id="KW-0441">Lipid A biosynthesis</keyword>
<keyword id="KW-0444">Lipid biosynthesis</keyword>
<keyword id="KW-0443">Lipid metabolism</keyword>
<keyword id="KW-0479">Metal-binding</keyword>
<keyword id="KW-0862">Zinc</keyword>